<dbReference type="EMBL" id="CP000946">
    <property type="protein sequence ID" value="ACA76778.1"/>
    <property type="molecule type" value="Genomic_DNA"/>
</dbReference>
<dbReference type="RefSeq" id="WP_000020749.1">
    <property type="nucleotide sequence ID" value="NZ_MTFT01000002.1"/>
</dbReference>
<dbReference type="SMR" id="B1IVR1"/>
<dbReference type="GeneID" id="75172680"/>
<dbReference type="KEGG" id="ecl:EcolC_1111"/>
<dbReference type="HOGENOM" id="CLU_038009_1_2_6"/>
<dbReference type="GO" id="GO:0005829">
    <property type="term" value="C:cytosol"/>
    <property type="evidence" value="ECO:0007669"/>
    <property type="project" value="TreeGrafter"/>
</dbReference>
<dbReference type="GO" id="GO:0005886">
    <property type="term" value="C:plasma membrane"/>
    <property type="evidence" value="ECO:0007669"/>
    <property type="project" value="UniProtKB-SubCell"/>
</dbReference>
<dbReference type="GO" id="GO:0005525">
    <property type="term" value="F:GTP binding"/>
    <property type="evidence" value="ECO:0007669"/>
    <property type="project" value="UniProtKB-UniRule"/>
</dbReference>
<dbReference type="GO" id="GO:0003924">
    <property type="term" value="F:GTPase activity"/>
    <property type="evidence" value="ECO:0007669"/>
    <property type="project" value="UniProtKB-UniRule"/>
</dbReference>
<dbReference type="GO" id="GO:0043024">
    <property type="term" value="F:ribosomal small subunit binding"/>
    <property type="evidence" value="ECO:0007669"/>
    <property type="project" value="TreeGrafter"/>
</dbReference>
<dbReference type="GO" id="GO:0070181">
    <property type="term" value="F:small ribosomal subunit rRNA binding"/>
    <property type="evidence" value="ECO:0007669"/>
    <property type="project" value="UniProtKB-UniRule"/>
</dbReference>
<dbReference type="GO" id="GO:0000028">
    <property type="term" value="P:ribosomal small subunit assembly"/>
    <property type="evidence" value="ECO:0007669"/>
    <property type="project" value="TreeGrafter"/>
</dbReference>
<dbReference type="CDD" id="cd04163">
    <property type="entry name" value="Era"/>
    <property type="match status" value="1"/>
</dbReference>
<dbReference type="CDD" id="cd22534">
    <property type="entry name" value="KH-II_Era"/>
    <property type="match status" value="1"/>
</dbReference>
<dbReference type="FunFam" id="3.30.300.20:FF:000003">
    <property type="entry name" value="GTPase Era"/>
    <property type="match status" value="1"/>
</dbReference>
<dbReference type="FunFam" id="3.40.50.300:FF:000094">
    <property type="entry name" value="GTPase Era"/>
    <property type="match status" value="1"/>
</dbReference>
<dbReference type="Gene3D" id="3.30.300.20">
    <property type="match status" value="1"/>
</dbReference>
<dbReference type="Gene3D" id="3.40.50.300">
    <property type="entry name" value="P-loop containing nucleotide triphosphate hydrolases"/>
    <property type="match status" value="1"/>
</dbReference>
<dbReference type="HAMAP" id="MF_00367">
    <property type="entry name" value="GTPase_Era"/>
    <property type="match status" value="1"/>
</dbReference>
<dbReference type="InterPro" id="IPR030388">
    <property type="entry name" value="G_ERA_dom"/>
</dbReference>
<dbReference type="InterPro" id="IPR006073">
    <property type="entry name" value="GTP-bd"/>
</dbReference>
<dbReference type="InterPro" id="IPR005662">
    <property type="entry name" value="GTPase_Era-like"/>
</dbReference>
<dbReference type="InterPro" id="IPR015946">
    <property type="entry name" value="KH_dom-like_a/b"/>
</dbReference>
<dbReference type="InterPro" id="IPR004044">
    <property type="entry name" value="KH_dom_type_2"/>
</dbReference>
<dbReference type="InterPro" id="IPR009019">
    <property type="entry name" value="KH_sf_prok-type"/>
</dbReference>
<dbReference type="InterPro" id="IPR027417">
    <property type="entry name" value="P-loop_NTPase"/>
</dbReference>
<dbReference type="InterPro" id="IPR005225">
    <property type="entry name" value="Small_GTP-bd"/>
</dbReference>
<dbReference type="NCBIfam" id="TIGR00436">
    <property type="entry name" value="era"/>
    <property type="match status" value="1"/>
</dbReference>
<dbReference type="NCBIfam" id="NF000908">
    <property type="entry name" value="PRK00089.1"/>
    <property type="match status" value="1"/>
</dbReference>
<dbReference type="NCBIfam" id="TIGR00231">
    <property type="entry name" value="small_GTP"/>
    <property type="match status" value="1"/>
</dbReference>
<dbReference type="PANTHER" id="PTHR42698">
    <property type="entry name" value="GTPASE ERA"/>
    <property type="match status" value="1"/>
</dbReference>
<dbReference type="PANTHER" id="PTHR42698:SF1">
    <property type="entry name" value="GTPASE ERA, MITOCHONDRIAL"/>
    <property type="match status" value="1"/>
</dbReference>
<dbReference type="Pfam" id="PF07650">
    <property type="entry name" value="KH_2"/>
    <property type="match status" value="1"/>
</dbReference>
<dbReference type="Pfam" id="PF01926">
    <property type="entry name" value="MMR_HSR1"/>
    <property type="match status" value="1"/>
</dbReference>
<dbReference type="SUPFAM" id="SSF52540">
    <property type="entry name" value="P-loop containing nucleoside triphosphate hydrolases"/>
    <property type="match status" value="1"/>
</dbReference>
<dbReference type="SUPFAM" id="SSF54814">
    <property type="entry name" value="Prokaryotic type KH domain (KH-domain type II)"/>
    <property type="match status" value="1"/>
</dbReference>
<dbReference type="PROSITE" id="PS51713">
    <property type="entry name" value="G_ERA"/>
    <property type="match status" value="1"/>
</dbReference>
<dbReference type="PROSITE" id="PS50823">
    <property type="entry name" value="KH_TYPE_2"/>
    <property type="match status" value="1"/>
</dbReference>
<sequence>MSIDKSYCGFIAIVGRPNVGKSTLLNKLLGQKISITSRKAQTTRHRIVGIHTEGAYQAIYVDTPGLHMEEKRAINRLMNKAASSSIGDVELVIFVVEGTRWTPDDEMVLNKLREGKAPVILAVNKVDNVQEKADLLPHLQFLASQMNFLDIVPISAETGLNVDTIAAIVRKHLPEATHHFPEDYITDRSQRFMASEIIREKLMRFLGAELPYSVTVEIERFVSNERGGYDINGLILVEREGQKKMVIGNKGAKIKTIGIEARKDMQEMFEAPVHLELWVKVKSGWADDERALRSLGYVDDL</sequence>
<feature type="chain" id="PRO_1000079690" description="GTPase Era">
    <location>
        <begin position="1"/>
        <end position="301"/>
    </location>
</feature>
<feature type="domain" description="Era-type G" evidence="2">
    <location>
        <begin position="7"/>
        <end position="175"/>
    </location>
</feature>
<feature type="domain" description="KH type-2" evidence="1">
    <location>
        <begin position="206"/>
        <end position="283"/>
    </location>
</feature>
<feature type="region of interest" description="G1" evidence="2">
    <location>
        <begin position="15"/>
        <end position="22"/>
    </location>
</feature>
<feature type="region of interest" description="G2" evidence="2">
    <location>
        <begin position="41"/>
        <end position="45"/>
    </location>
</feature>
<feature type="region of interest" description="G3" evidence="2">
    <location>
        <begin position="62"/>
        <end position="65"/>
    </location>
</feature>
<feature type="region of interest" description="G4" evidence="2">
    <location>
        <begin position="124"/>
        <end position="127"/>
    </location>
</feature>
<feature type="region of interest" description="G5" evidence="2">
    <location>
        <begin position="154"/>
        <end position="156"/>
    </location>
</feature>
<feature type="binding site" evidence="1">
    <location>
        <begin position="15"/>
        <end position="22"/>
    </location>
    <ligand>
        <name>GTP</name>
        <dbReference type="ChEBI" id="CHEBI:37565"/>
    </ligand>
</feature>
<feature type="binding site" evidence="1">
    <location>
        <begin position="62"/>
        <end position="66"/>
    </location>
    <ligand>
        <name>GTP</name>
        <dbReference type="ChEBI" id="CHEBI:37565"/>
    </ligand>
</feature>
<feature type="binding site" evidence="1">
    <location>
        <begin position="124"/>
        <end position="127"/>
    </location>
    <ligand>
        <name>GTP</name>
        <dbReference type="ChEBI" id="CHEBI:37565"/>
    </ligand>
</feature>
<comment type="function">
    <text evidence="1">An essential GTPase that binds both GDP and GTP, with rapid nucleotide exchange. Plays a role in 16S rRNA processing and 30S ribosomal subunit biogenesis and possibly also in cell cycle regulation and energy metabolism.</text>
</comment>
<comment type="subunit">
    <text evidence="1">Monomer.</text>
</comment>
<comment type="subcellular location">
    <subcellularLocation>
        <location>Cytoplasm</location>
    </subcellularLocation>
    <subcellularLocation>
        <location evidence="1">Cell inner membrane</location>
        <topology evidence="1">Peripheral membrane protein</topology>
    </subcellularLocation>
</comment>
<comment type="similarity">
    <text evidence="1 2">Belongs to the TRAFAC class TrmE-Era-EngA-EngB-Septin-like GTPase superfamily. Era GTPase family.</text>
</comment>
<protein>
    <recommendedName>
        <fullName evidence="1">GTPase Era</fullName>
    </recommendedName>
</protein>
<proteinExistence type="inferred from homology"/>
<accession>B1IVR1</accession>
<reference key="1">
    <citation type="submission" date="2008-02" db="EMBL/GenBank/DDBJ databases">
        <title>Complete sequence of Escherichia coli C str. ATCC 8739.</title>
        <authorList>
            <person name="Copeland A."/>
            <person name="Lucas S."/>
            <person name="Lapidus A."/>
            <person name="Glavina del Rio T."/>
            <person name="Dalin E."/>
            <person name="Tice H."/>
            <person name="Bruce D."/>
            <person name="Goodwin L."/>
            <person name="Pitluck S."/>
            <person name="Kiss H."/>
            <person name="Brettin T."/>
            <person name="Detter J.C."/>
            <person name="Han C."/>
            <person name="Kuske C.R."/>
            <person name="Schmutz J."/>
            <person name="Larimer F."/>
            <person name="Land M."/>
            <person name="Hauser L."/>
            <person name="Kyrpides N."/>
            <person name="Mikhailova N."/>
            <person name="Ingram L."/>
            <person name="Richardson P."/>
        </authorList>
    </citation>
    <scope>NUCLEOTIDE SEQUENCE [LARGE SCALE GENOMIC DNA]</scope>
    <source>
        <strain>ATCC 8739 / DSM 1576 / NBRC 3972 / NCIMB 8545 / WDCM 00012 / Crooks</strain>
    </source>
</reference>
<evidence type="ECO:0000255" key="1">
    <source>
        <dbReference type="HAMAP-Rule" id="MF_00367"/>
    </source>
</evidence>
<evidence type="ECO:0000255" key="2">
    <source>
        <dbReference type="PROSITE-ProRule" id="PRU01050"/>
    </source>
</evidence>
<organism>
    <name type="scientific">Escherichia coli (strain ATCC 8739 / DSM 1576 / NBRC 3972 / NCIMB 8545 / WDCM 00012 / Crooks)</name>
    <dbReference type="NCBI Taxonomy" id="481805"/>
    <lineage>
        <taxon>Bacteria</taxon>
        <taxon>Pseudomonadati</taxon>
        <taxon>Pseudomonadota</taxon>
        <taxon>Gammaproteobacteria</taxon>
        <taxon>Enterobacterales</taxon>
        <taxon>Enterobacteriaceae</taxon>
        <taxon>Escherichia</taxon>
    </lineage>
</organism>
<gene>
    <name evidence="1" type="primary">era</name>
    <name type="ordered locus">EcolC_1111</name>
</gene>
<name>ERA_ECOLC</name>
<keyword id="KW-0997">Cell inner membrane</keyword>
<keyword id="KW-1003">Cell membrane</keyword>
<keyword id="KW-0963">Cytoplasm</keyword>
<keyword id="KW-0342">GTP-binding</keyword>
<keyword id="KW-0472">Membrane</keyword>
<keyword id="KW-0547">Nucleotide-binding</keyword>
<keyword id="KW-0690">Ribosome biogenesis</keyword>
<keyword id="KW-0694">RNA-binding</keyword>
<keyword id="KW-0699">rRNA-binding</keyword>